<feature type="chain" id="PRO_0000200405" description="Cytochrome b559 subunit beta">
    <location>
        <begin position="1"/>
        <end position="39"/>
    </location>
</feature>
<feature type="transmembrane region" description="Helical" evidence="1">
    <location>
        <begin position="14"/>
        <end position="30"/>
    </location>
</feature>
<feature type="binding site" description="axial binding residue" evidence="1">
    <location>
        <position position="18"/>
    </location>
    <ligand>
        <name>heme</name>
        <dbReference type="ChEBI" id="CHEBI:30413"/>
        <note>ligand shared with alpha subunit</note>
    </ligand>
    <ligandPart>
        <name>Fe</name>
        <dbReference type="ChEBI" id="CHEBI:18248"/>
    </ligandPart>
</feature>
<organism>
    <name type="scientific">Ipomoea batatas</name>
    <name type="common">Sweet potato</name>
    <name type="synonym">Convolvulus batatas</name>
    <dbReference type="NCBI Taxonomy" id="4120"/>
    <lineage>
        <taxon>Eukaryota</taxon>
        <taxon>Viridiplantae</taxon>
        <taxon>Streptophyta</taxon>
        <taxon>Embryophyta</taxon>
        <taxon>Tracheophyta</taxon>
        <taxon>Spermatophyta</taxon>
        <taxon>Magnoliopsida</taxon>
        <taxon>eudicotyledons</taxon>
        <taxon>Gunneridae</taxon>
        <taxon>Pentapetalae</taxon>
        <taxon>asterids</taxon>
        <taxon>lamiids</taxon>
        <taxon>Solanales</taxon>
        <taxon>Convolvulaceae</taxon>
        <taxon>Ipomoeeae</taxon>
        <taxon>Ipomoea</taxon>
    </lineage>
</organism>
<proteinExistence type="inferred from homology"/>
<sequence>MTIDRTYPIFTVRWLAVHGLAVPTVFFLGSISAMQFIQR</sequence>
<accession>Q7H8K0</accession>
<geneLocation type="chloroplast"/>
<evidence type="ECO:0000255" key="1">
    <source>
        <dbReference type="HAMAP-Rule" id="MF_00643"/>
    </source>
</evidence>
<protein>
    <recommendedName>
        <fullName evidence="1">Cytochrome b559 subunit beta</fullName>
    </recommendedName>
    <alternativeName>
        <fullName evidence="1">PSII reaction center subunit VI</fullName>
    </alternativeName>
</protein>
<name>PSBF_IPOBA</name>
<keyword id="KW-0150">Chloroplast</keyword>
<keyword id="KW-0249">Electron transport</keyword>
<keyword id="KW-0349">Heme</keyword>
<keyword id="KW-0408">Iron</keyword>
<keyword id="KW-0472">Membrane</keyword>
<keyword id="KW-0479">Metal-binding</keyword>
<keyword id="KW-0602">Photosynthesis</keyword>
<keyword id="KW-0604">Photosystem II</keyword>
<keyword id="KW-0934">Plastid</keyword>
<keyword id="KW-0793">Thylakoid</keyword>
<keyword id="KW-0812">Transmembrane</keyword>
<keyword id="KW-1133">Transmembrane helix</keyword>
<keyword id="KW-0813">Transport</keyword>
<gene>
    <name evidence="1" type="primary">psbF</name>
</gene>
<reference key="1">
    <citation type="journal article" date="2002" name="Am. J. Bot.">
        <title>Monophyly of the Convolvulaceae and circumscription of their major lineages based on DNA sequences of multiple chloroplast loci.</title>
        <authorList>
            <person name="Stefanovic S."/>
            <person name="Krueger L."/>
            <person name="Olmstead R.G."/>
        </authorList>
        <dbReference type="AGRICOLA" id="IND23320510"/>
    </citation>
    <scope>NUCLEOTIDE SEQUENCE [GENOMIC DNA]</scope>
</reference>
<dbReference type="EMBL" id="AY100860">
    <property type="protein sequence ID" value="AAM55562.1"/>
    <property type="molecule type" value="Genomic_DNA"/>
</dbReference>
<dbReference type="RefSeq" id="YP_009128407.1">
    <property type="nucleotide sequence ID" value="NC_026703.1"/>
</dbReference>
<dbReference type="SMR" id="Q7H8K0"/>
<dbReference type="GeneID" id="23764584"/>
<dbReference type="GO" id="GO:0009535">
    <property type="term" value="C:chloroplast thylakoid membrane"/>
    <property type="evidence" value="ECO:0007669"/>
    <property type="project" value="UniProtKB-SubCell"/>
</dbReference>
<dbReference type="GO" id="GO:0009539">
    <property type="term" value="C:photosystem II reaction center"/>
    <property type="evidence" value="ECO:0007669"/>
    <property type="project" value="InterPro"/>
</dbReference>
<dbReference type="GO" id="GO:0009055">
    <property type="term" value="F:electron transfer activity"/>
    <property type="evidence" value="ECO:0007669"/>
    <property type="project" value="UniProtKB-UniRule"/>
</dbReference>
<dbReference type="GO" id="GO:0020037">
    <property type="term" value="F:heme binding"/>
    <property type="evidence" value="ECO:0007669"/>
    <property type="project" value="InterPro"/>
</dbReference>
<dbReference type="GO" id="GO:0005506">
    <property type="term" value="F:iron ion binding"/>
    <property type="evidence" value="ECO:0007669"/>
    <property type="project" value="UniProtKB-UniRule"/>
</dbReference>
<dbReference type="GO" id="GO:0009767">
    <property type="term" value="P:photosynthetic electron transport chain"/>
    <property type="evidence" value="ECO:0007669"/>
    <property type="project" value="InterPro"/>
</dbReference>
<dbReference type="HAMAP" id="MF_00643">
    <property type="entry name" value="PSII_PsbF"/>
    <property type="match status" value="1"/>
</dbReference>
<dbReference type="InterPro" id="IPR006241">
    <property type="entry name" value="PSII_cyt_b559_bsu"/>
</dbReference>
<dbReference type="InterPro" id="IPR006216">
    <property type="entry name" value="PSII_cyt_b559_CS"/>
</dbReference>
<dbReference type="InterPro" id="IPR013081">
    <property type="entry name" value="PSII_cyt_b559_N"/>
</dbReference>
<dbReference type="NCBIfam" id="TIGR01333">
    <property type="entry name" value="cyt_b559_beta"/>
    <property type="match status" value="1"/>
</dbReference>
<dbReference type="Pfam" id="PF00283">
    <property type="entry name" value="Cytochrom_B559"/>
    <property type="match status" value="1"/>
</dbReference>
<dbReference type="PIRSF" id="PIRSF000037">
    <property type="entry name" value="PsbF"/>
    <property type="match status" value="1"/>
</dbReference>
<dbReference type="SUPFAM" id="SSF161045">
    <property type="entry name" value="Cytochrome b559 subunits"/>
    <property type="match status" value="1"/>
</dbReference>
<dbReference type="PROSITE" id="PS00537">
    <property type="entry name" value="CYTOCHROME_B559"/>
    <property type="match status" value="1"/>
</dbReference>
<comment type="function">
    <text evidence="1">This b-type cytochrome is tightly associated with the reaction center of photosystem II (PSII). PSII is a light-driven water:plastoquinone oxidoreductase that uses light energy to abstract electrons from H(2)O, generating O(2) and a proton gradient subsequently used for ATP formation. It consists of a core antenna complex that captures photons, and an electron transfer chain that converts photonic excitation into a charge separation.</text>
</comment>
<comment type="cofactor">
    <cofactor evidence="1">
        <name>heme b</name>
        <dbReference type="ChEBI" id="CHEBI:60344"/>
    </cofactor>
    <text evidence="1">With its partner (PsbE) binds heme. PSII binds additional chlorophylls, carotenoids and specific lipids.</text>
</comment>
<comment type="subunit">
    <text evidence="1">Heterodimer of an alpha subunit and a beta subunit. PSII is composed of 1 copy each of membrane proteins PsbA, PsbB, PsbC, PsbD, PsbE, PsbF, PsbH, PsbI, PsbJ, PsbK, PsbL, PsbM, PsbT, PsbX, PsbY, PsbZ, Psb30/Ycf12, at least 3 peripheral proteins of the oxygen-evolving complex and a large number of cofactors. It forms dimeric complexes.</text>
</comment>
<comment type="subcellular location">
    <subcellularLocation>
        <location evidence="1">Plastid</location>
        <location evidence="1">Chloroplast thylakoid membrane</location>
        <topology evidence="1">Single-pass membrane protein</topology>
    </subcellularLocation>
</comment>
<comment type="similarity">
    <text evidence="1">Belongs to the PsbE/PsbF family.</text>
</comment>